<organismHost>
    <name type="scientific">Solanum tuberosum</name>
    <name type="common">Potato</name>
    <dbReference type="NCBI Taxonomy" id="4113"/>
</organismHost>
<keyword id="KW-1031">Host cell junction</keyword>
<keyword id="KW-1040">Host Golgi apparatus</keyword>
<keyword id="KW-1043">Host membrane</keyword>
<keyword id="KW-1045">Host mitochondrion</keyword>
<keyword id="KW-1047">Host mitochondrion outer membrane</keyword>
<keyword id="KW-0472">Membrane</keyword>
<keyword id="KW-0597">Phosphoprotein</keyword>
<keyword id="KW-0813">Transport</keyword>
<keyword id="KW-0916">Viral movement protein</keyword>
<accession>P10471</accession>
<feature type="chain" id="PRO_0000222422" description="Movement protein P17">
    <location>
        <begin position="1"/>
        <end position="156"/>
    </location>
</feature>
<feature type="region of interest" description="Homodimerization" evidence="9">
    <location>
        <begin position="38"/>
        <end position="54"/>
    </location>
</feature>
<feature type="region of interest" description="RNA-binding" evidence="5">
    <location>
        <begin position="57"/>
        <end position="156"/>
    </location>
</feature>
<feature type="region of interest" description="Disordered" evidence="3">
    <location>
        <begin position="106"/>
        <end position="156"/>
    </location>
</feature>
<feature type="compositionally biased region" description="Basic residues" evidence="3">
    <location>
        <begin position="144"/>
        <end position="156"/>
    </location>
</feature>
<feature type="modified residue" description="Phosphoserine" evidence="6">
    <location>
        <position position="71"/>
    </location>
</feature>
<feature type="modified residue" description="Phosphoserine" evidence="6">
    <location>
        <position position="79"/>
    </location>
</feature>
<feature type="modified residue" description="Phosphoserine" evidence="6">
    <location>
        <position position="137"/>
    </location>
</feature>
<feature type="modified residue" description="Phosphoserine" evidence="6">
    <location>
        <position position="140"/>
    </location>
</feature>
<protein>
    <recommendedName>
        <fullName>Movement protein P17</fullName>
        <shortName>MP</shortName>
    </recommendedName>
    <alternativeName>
        <fullName>17 kDa protein</fullName>
    </alternativeName>
    <alternativeName>
        <fullName>MP17</fullName>
    </alternativeName>
</protein>
<name>MVP_PLRV</name>
<dbReference type="EMBL" id="X13906">
    <property type="protein sequence ID" value="CAA32107.1"/>
    <property type="molecule type" value="Genomic_RNA"/>
</dbReference>
<dbReference type="iPTMnet" id="P10471"/>
<dbReference type="GO" id="GO:0044177">
    <property type="term" value="C:host cell Golgi apparatus"/>
    <property type="evidence" value="ECO:0007669"/>
    <property type="project" value="UniProtKB-SubCell"/>
</dbReference>
<dbReference type="GO" id="GO:0044193">
    <property type="term" value="C:host cell mitochondrial outer membrane"/>
    <property type="evidence" value="ECO:0007669"/>
    <property type="project" value="UniProtKB-SubCell"/>
</dbReference>
<dbReference type="GO" id="GO:0044219">
    <property type="term" value="C:host cell plasmodesma"/>
    <property type="evidence" value="ECO:0007669"/>
    <property type="project" value="UniProtKB-SubCell"/>
</dbReference>
<dbReference type="GO" id="GO:0016020">
    <property type="term" value="C:membrane"/>
    <property type="evidence" value="ECO:0007669"/>
    <property type="project" value="UniProtKB-KW"/>
</dbReference>
<dbReference type="GO" id="GO:0046740">
    <property type="term" value="P:transport of virus in host, cell to cell"/>
    <property type="evidence" value="ECO:0007669"/>
    <property type="project" value="UniProtKB-KW"/>
</dbReference>
<dbReference type="InterPro" id="IPR001964">
    <property type="entry name" value="Luteo_VPG"/>
</dbReference>
<dbReference type="Pfam" id="PF01659">
    <property type="entry name" value="Luteo_Vpg"/>
    <property type="match status" value="1"/>
</dbReference>
<dbReference type="PRINTS" id="PR00912">
    <property type="entry name" value="LVIRUSORF5"/>
</dbReference>
<evidence type="ECO:0000250" key="1">
    <source>
        <dbReference type="UniProtKB" id="P09511"/>
    </source>
</evidence>
<evidence type="ECO:0000250" key="2">
    <source>
        <dbReference type="UniProtKB" id="P17524"/>
    </source>
</evidence>
<evidence type="ECO:0000256" key="3">
    <source>
        <dbReference type="SAM" id="MobiDB-lite"/>
    </source>
</evidence>
<evidence type="ECO:0000269" key="4">
    <source>
    </source>
</evidence>
<evidence type="ECO:0000269" key="5">
    <source>
    </source>
</evidence>
<evidence type="ECO:0000269" key="6">
    <source>
    </source>
</evidence>
<evidence type="ECO:0000269" key="7">
    <source>
    </source>
</evidence>
<evidence type="ECO:0000269" key="8">
    <source>
    </source>
</evidence>
<evidence type="ECO:0000303" key="9">
    <source>
    </source>
</evidence>
<evidence type="ECO:0000305" key="10"/>
<evidence type="ECO:0000305" key="11">
    <source>
    </source>
</evidence>
<proteinExistence type="evidence at protein level"/>
<comment type="function">
    <text evidence="2 5 10">Together with movement protein P3a, facilitates long-distance movement of virions in host (By similarity). Transports viral genome to neighboring plant cells directly through plasmosdesmata, without any budding (Probable). The movement protein allows efficient cell to cell propagation, by bypassing the host cell wall barrier (Probable). Binds ssRNA (PubMed:1908517).</text>
</comment>
<comment type="subunit">
    <text evidence="7">Homodimer.</text>
</comment>
<comment type="subcellular location">
    <subcellularLocation>
        <location evidence="4 6">Host cell junction</location>
        <location evidence="4 6">Host plasmodesma</location>
    </subcellularLocation>
    <subcellularLocation>
        <location evidence="6">Host chloroplast envelope</location>
    </subcellularLocation>
    <subcellularLocation>
        <location evidence="1">Host Golgi apparatus</location>
    </subcellularLocation>
    <subcellularLocation>
        <location evidence="2">Host mitochondrion outer membrane</location>
    </subcellularLocation>
    <text evidence="2 4">Localizes to secondary branched plasmodesmata in source organs. Targeted to plasmodesmata in an actin- and endoplasmic reticulum-Golgi-dependent manner (PubMed:17631001). P3a directs P17 to the mitochondrial outer membrane while P17 regulates the localization of the P3a-P17 heterodimer to plastids (By similarity).</text>
</comment>
<comment type="domain">
    <text evidence="5 6 7 8">The N-terminus is involved in homodimerization (PubMed:8212563). The C-terminus binds ssRNA (PubMed:1908517). The C-terminus is phosphorylated (PubMed:22645527, PubMed:9001398).</text>
</comment>
<comment type="PTM">
    <text evidence="6 7 8 11">Expressed as a nonphosphorylated 20kDa form and a phosphorylated 22kDa form (Probable) (PubMed:8212563). Phosphorylated by a host PKC-related kinase (PubMed:9001398). Serine phosphorylation is required for plamodesma targeting (PubMed:22645527).</text>
</comment>
<comment type="similarity">
    <text evidence="10">Belongs to the polerovirus movement protein family.</text>
</comment>
<reference key="1">
    <citation type="journal article" date="1989" name="Nucleic Acids Res.">
        <title>Nucleotide sequence of the potato leafroll virus coat protein gene.</title>
        <authorList>
            <person name="Prill B."/>
            <person name="Maiss E."/>
            <person name="Timpe V."/>
            <person name="Casper R."/>
        </authorList>
    </citation>
    <scope>NUCLEOTIDE SEQUENCE [GENOMIC RNA]</scope>
</reference>
<reference key="2">
    <citation type="journal article" date="1991" name="J. Gen. Virol.">
        <title>The potato leafroll luteovirus 17K protein is a single-stranded nucleic acid-binding protein.</title>
        <authorList>
            <person name="Tacke E."/>
            <person name="Pruefer D."/>
            <person name="Schmitz J."/>
            <person name="Rohde W."/>
        </authorList>
    </citation>
    <scope>RNA-BINDING</scope>
    <scope>DOMAIN</scope>
</reference>
<reference key="3">
    <citation type="journal article" date="1993" name="Virology">
        <title>Mutational analysis of the nucleic acid-binding 17 kDa phosphoprotein of potato leafroll luteovirus identifies an amphipathic alpha-helix as the domain for protein/protein interactions.</title>
        <authorList>
            <person name="Tacke E."/>
            <person name="Schmitz J."/>
            <person name="Pruefer D."/>
            <person name="Rohde W."/>
        </authorList>
    </citation>
    <scope>PHOSPHORYLATION</scope>
    <scope>DOMAIN</scope>
    <scope>SUBUNIT</scope>
</reference>
<reference key="4">
    <citation type="journal article" date="1997" name="FEBS Lett.">
        <title>The potato leafroll virus 17K movement protein is phosphorylated by a membrane-associated protein kinase from potato with biochemical features of protein kinase C.</title>
        <authorList>
            <person name="Sokolova M."/>
            <person name="Pruefer D."/>
            <person name="Tacke E."/>
            <person name="Rohde W."/>
        </authorList>
    </citation>
    <scope>PHOSPHORYLATION</scope>
    <scope>DOMAIN</scope>
    <scope>SUBCELLULAR LOCATION</scope>
</reference>
<reference key="5">
    <citation type="journal article" date="2007" name="Traffic">
        <title>Intracellular trafficking of Potato leafroll virus movement protein in transgenic Arabidopsis.</title>
        <authorList>
            <person name="Vogel F."/>
            <person name="Hofius D."/>
            <person name="Sonnewald U."/>
        </authorList>
    </citation>
    <scope>SUBCELLULAR LOCATION</scope>
</reference>
<reference key="6">
    <citation type="journal article" date="2011" name="Front. Plant Sci.">
        <title>PD Trafficking of Potato Leaf Roll Virus Movement Protein in Arabidopsis Depends on Site-specific Protein Phosphorylation.</title>
        <authorList>
            <person name="Link K."/>
            <person name="Vogel F."/>
            <person name="Sonnewald U."/>
        </authorList>
    </citation>
    <scope>PHOSPHORYLATION AT SER-71; SER-79; SER-137 AND SER-140</scope>
    <scope>SUBCELLULAR LOCATION</scope>
</reference>
<gene>
    <name type="ORF">ORF4</name>
</gene>
<organism>
    <name type="scientific">Potato leafroll virus</name>
    <name type="common">PLrV</name>
    <dbReference type="NCBI Taxonomy" id="12045"/>
    <lineage>
        <taxon>Viruses</taxon>
        <taxon>Riboviria</taxon>
        <taxon>Orthornavirae</taxon>
        <taxon>Pisuviricota</taxon>
        <taxon>Pisoniviricetes</taxon>
        <taxon>Sobelivirales</taxon>
        <taxon>Solemoviridae</taxon>
        <taxon>Polerovirus</taxon>
    </lineage>
</organism>
<sequence length="156" mass="17285">MSMVVYNNQGGEEGNPFAGALTEFSQWLWSRPLGNPGAEDVEEEAIAAQEELEFPEDEAQARHSCLQRTTSWATPKEVSPSGRVYQTVRLSRMEYSRPTMSIRSQASYFSSSARPLPPPPAPSLMSWTPIAKYHPSSPTSTSSKLRRAAPKLIKRG</sequence>